<gene>
    <name evidence="4 7" type="primary">wkd</name>
    <name evidence="7" type="ORF">CG5344</name>
</gene>
<reference evidence="8" key="1">
    <citation type="journal article" date="2000" name="Science">
        <title>The genome sequence of Drosophila melanogaster.</title>
        <authorList>
            <person name="Adams M.D."/>
            <person name="Celniker S.E."/>
            <person name="Holt R.A."/>
            <person name="Evans C.A."/>
            <person name="Gocayne J.D."/>
            <person name="Amanatides P.G."/>
            <person name="Scherer S.E."/>
            <person name="Li P.W."/>
            <person name="Hoskins R.A."/>
            <person name="Galle R.F."/>
            <person name="George R.A."/>
            <person name="Lewis S.E."/>
            <person name="Richards S."/>
            <person name="Ashburner M."/>
            <person name="Henderson S.N."/>
            <person name="Sutton G.G."/>
            <person name="Wortman J.R."/>
            <person name="Yandell M.D."/>
            <person name="Zhang Q."/>
            <person name="Chen L.X."/>
            <person name="Brandon R.C."/>
            <person name="Rogers Y.-H.C."/>
            <person name="Blazej R.G."/>
            <person name="Champe M."/>
            <person name="Pfeiffer B.D."/>
            <person name="Wan K.H."/>
            <person name="Doyle C."/>
            <person name="Baxter E.G."/>
            <person name="Helt G."/>
            <person name="Nelson C.R."/>
            <person name="Miklos G.L.G."/>
            <person name="Abril J.F."/>
            <person name="Agbayani A."/>
            <person name="An H.-J."/>
            <person name="Andrews-Pfannkoch C."/>
            <person name="Baldwin D."/>
            <person name="Ballew R.M."/>
            <person name="Basu A."/>
            <person name="Baxendale J."/>
            <person name="Bayraktaroglu L."/>
            <person name="Beasley E.M."/>
            <person name="Beeson K.Y."/>
            <person name="Benos P.V."/>
            <person name="Berman B.P."/>
            <person name="Bhandari D."/>
            <person name="Bolshakov S."/>
            <person name="Borkova D."/>
            <person name="Botchan M.R."/>
            <person name="Bouck J."/>
            <person name="Brokstein P."/>
            <person name="Brottier P."/>
            <person name="Burtis K.C."/>
            <person name="Busam D.A."/>
            <person name="Butler H."/>
            <person name="Cadieu E."/>
            <person name="Center A."/>
            <person name="Chandra I."/>
            <person name="Cherry J.M."/>
            <person name="Cawley S."/>
            <person name="Dahlke C."/>
            <person name="Davenport L.B."/>
            <person name="Davies P."/>
            <person name="de Pablos B."/>
            <person name="Delcher A."/>
            <person name="Deng Z."/>
            <person name="Mays A.D."/>
            <person name="Dew I."/>
            <person name="Dietz S.M."/>
            <person name="Dodson K."/>
            <person name="Doup L.E."/>
            <person name="Downes M."/>
            <person name="Dugan-Rocha S."/>
            <person name="Dunkov B.C."/>
            <person name="Dunn P."/>
            <person name="Durbin K.J."/>
            <person name="Evangelista C.C."/>
            <person name="Ferraz C."/>
            <person name="Ferriera S."/>
            <person name="Fleischmann W."/>
            <person name="Fosler C."/>
            <person name="Gabrielian A.E."/>
            <person name="Garg N.S."/>
            <person name="Gelbart W.M."/>
            <person name="Glasser K."/>
            <person name="Glodek A."/>
            <person name="Gong F."/>
            <person name="Gorrell J.H."/>
            <person name="Gu Z."/>
            <person name="Guan P."/>
            <person name="Harris M."/>
            <person name="Harris N.L."/>
            <person name="Harvey D.A."/>
            <person name="Heiman T.J."/>
            <person name="Hernandez J.R."/>
            <person name="Houck J."/>
            <person name="Hostin D."/>
            <person name="Houston K.A."/>
            <person name="Howland T.J."/>
            <person name="Wei M.-H."/>
            <person name="Ibegwam C."/>
            <person name="Jalali M."/>
            <person name="Kalush F."/>
            <person name="Karpen G.H."/>
            <person name="Ke Z."/>
            <person name="Kennison J.A."/>
            <person name="Ketchum K.A."/>
            <person name="Kimmel B.E."/>
            <person name="Kodira C.D."/>
            <person name="Kraft C.L."/>
            <person name="Kravitz S."/>
            <person name="Kulp D."/>
            <person name="Lai Z."/>
            <person name="Lasko P."/>
            <person name="Lei Y."/>
            <person name="Levitsky A.A."/>
            <person name="Li J.H."/>
            <person name="Li Z."/>
            <person name="Liang Y."/>
            <person name="Lin X."/>
            <person name="Liu X."/>
            <person name="Mattei B."/>
            <person name="McIntosh T.C."/>
            <person name="McLeod M.P."/>
            <person name="McPherson D."/>
            <person name="Merkulov G."/>
            <person name="Milshina N.V."/>
            <person name="Mobarry C."/>
            <person name="Morris J."/>
            <person name="Moshrefi A."/>
            <person name="Mount S.M."/>
            <person name="Moy M."/>
            <person name="Murphy B."/>
            <person name="Murphy L."/>
            <person name="Muzny D.M."/>
            <person name="Nelson D.L."/>
            <person name="Nelson D.R."/>
            <person name="Nelson K.A."/>
            <person name="Nixon K."/>
            <person name="Nusskern D.R."/>
            <person name="Pacleb J.M."/>
            <person name="Palazzolo M."/>
            <person name="Pittman G.S."/>
            <person name="Pan S."/>
            <person name="Pollard J."/>
            <person name="Puri V."/>
            <person name="Reese M.G."/>
            <person name="Reinert K."/>
            <person name="Remington K."/>
            <person name="Saunders R.D.C."/>
            <person name="Scheeler F."/>
            <person name="Shen H."/>
            <person name="Shue B.C."/>
            <person name="Siden-Kiamos I."/>
            <person name="Simpson M."/>
            <person name="Skupski M.P."/>
            <person name="Smith T.J."/>
            <person name="Spier E."/>
            <person name="Spradling A.C."/>
            <person name="Stapleton M."/>
            <person name="Strong R."/>
            <person name="Sun E."/>
            <person name="Svirskas R."/>
            <person name="Tector C."/>
            <person name="Turner R."/>
            <person name="Venter E."/>
            <person name="Wang A.H."/>
            <person name="Wang X."/>
            <person name="Wang Z.-Y."/>
            <person name="Wassarman D.A."/>
            <person name="Weinstock G.M."/>
            <person name="Weissenbach J."/>
            <person name="Williams S.M."/>
            <person name="Woodage T."/>
            <person name="Worley K.C."/>
            <person name="Wu D."/>
            <person name="Yang S."/>
            <person name="Yao Q.A."/>
            <person name="Ye J."/>
            <person name="Yeh R.-F."/>
            <person name="Zaveri J.S."/>
            <person name="Zhan M."/>
            <person name="Zhang G."/>
            <person name="Zhao Q."/>
            <person name="Zheng L."/>
            <person name="Zheng X.H."/>
            <person name="Zhong F.N."/>
            <person name="Zhong W."/>
            <person name="Zhou X."/>
            <person name="Zhu S.C."/>
            <person name="Zhu X."/>
            <person name="Smith H.O."/>
            <person name="Gibbs R.A."/>
            <person name="Myers E.W."/>
            <person name="Rubin G.M."/>
            <person name="Venter J.C."/>
        </authorList>
    </citation>
    <scope>NUCLEOTIDE SEQUENCE [LARGE SCALE GENOMIC DNA]</scope>
    <source>
        <strain evidence="8">Berkeley</strain>
    </source>
</reference>
<reference evidence="8" key="2">
    <citation type="journal article" date="2002" name="Genome Biol.">
        <title>Annotation of the Drosophila melanogaster euchromatic genome: a systematic review.</title>
        <authorList>
            <person name="Misra S."/>
            <person name="Crosby M.A."/>
            <person name="Mungall C.J."/>
            <person name="Matthews B.B."/>
            <person name="Campbell K.S."/>
            <person name="Hradecky P."/>
            <person name="Huang Y."/>
            <person name="Kaminker J.S."/>
            <person name="Millburn G.H."/>
            <person name="Prochnik S.E."/>
            <person name="Smith C.D."/>
            <person name="Tupy J.L."/>
            <person name="Whitfield E.J."/>
            <person name="Bayraktaroglu L."/>
            <person name="Berman B.P."/>
            <person name="Bettencourt B.R."/>
            <person name="Celniker S.E."/>
            <person name="de Grey A.D.N.J."/>
            <person name="Drysdale R.A."/>
            <person name="Harris N.L."/>
            <person name="Richter J."/>
            <person name="Russo S."/>
            <person name="Schroeder A.J."/>
            <person name="Shu S.Q."/>
            <person name="Stapleton M."/>
            <person name="Yamada C."/>
            <person name="Ashburner M."/>
            <person name="Gelbart W.M."/>
            <person name="Rubin G.M."/>
            <person name="Lewis S.E."/>
        </authorList>
    </citation>
    <scope>GENOME REANNOTATION</scope>
    <source>
        <strain evidence="8">Berkeley</strain>
    </source>
</reference>
<reference evidence="6" key="3">
    <citation type="submission" date="2003-08" db="EMBL/GenBank/DDBJ databases">
        <authorList>
            <person name="Stapleton M."/>
            <person name="Brokstein P."/>
            <person name="Hong L."/>
            <person name="Agbayani A."/>
            <person name="Carlson J."/>
            <person name="Champe M."/>
            <person name="Chavez C."/>
            <person name="Dorsett V."/>
            <person name="Dresnek D."/>
            <person name="Farfan D."/>
            <person name="Frise E."/>
            <person name="George R."/>
            <person name="Gonzalez M."/>
            <person name="Guarin H."/>
            <person name="Kronmiller B."/>
            <person name="Li P."/>
            <person name="Liao G."/>
            <person name="Miranda A."/>
            <person name="Mungall C.J."/>
            <person name="Nunoo J."/>
            <person name="Pacleb J."/>
            <person name="Paragas V."/>
            <person name="Park S."/>
            <person name="Patel S."/>
            <person name="Phouanenavong S."/>
            <person name="Wan K."/>
            <person name="Yu C."/>
            <person name="Lewis S.E."/>
            <person name="Rubin G.M."/>
            <person name="Celniker S."/>
        </authorList>
    </citation>
    <scope>NUCLEOTIDE SEQUENCE [LARGE SCALE MRNA]</scope>
    <source>
        <strain evidence="6">Berkeley</strain>
        <tissue evidence="6">Embryo</tissue>
    </source>
</reference>
<reference evidence="5" key="4">
    <citation type="journal article" date="2012" name="Nat. Cell Biol.">
        <title>Whacked and Rab35 polarize dynein-motor-complex-dependent seamless tube growth.</title>
        <authorList>
            <person name="Schottenfeld-Roames J."/>
            <person name="Ghabrial A.S."/>
        </authorList>
    </citation>
    <scope>FUNCTION</scope>
    <scope>SUBCELLULAR LOCATION</scope>
    <scope>DISRUPTION PHENOTYPE</scope>
    <scope>MUTAGENESIS OF 6-ARG--LEU-363 AND MET-133</scope>
</reference>
<keyword id="KW-1003">Cell membrane</keyword>
<keyword id="KW-0966">Cell projection</keyword>
<keyword id="KW-0968">Cytoplasmic vesicle</keyword>
<keyword id="KW-0343">GTPase activation</keyword>
<keyword id="KW-0472">Membrane</keyword>
<keyword id="KW-1185">Reference proteome</keyword>
<protein>
    <recommendedName>
        <fullName evidence="4">TBC1 domain family member whacked</fullName>
    </recommendedName>
</protein>
<evidence type="ECO:0000255" key="1">
    <source>
        <dbReference type="PROSITE-ProRule" id="PRU00163"/>
    </source>
</evidence>
<evidence type="ECO:0000256" key="2">
    <source>
        <dbReference type="SAM" id="MobiDB-lite"/>
    </source>
</evidence>
<evidence type="ECO:0000269" key="3">
    <source>
    </source>
</evidence>
<evidence type="ECO:0000303" key="4">
    <source>
    </source>
</evidence>
<evidence type="ECO:0000305" key="5"/>
<evidence type="ECO:0000312" key="6">
    <source>
        <dbReference type="EMBL" id="AAQ23581.1"/>
    </source>
</evidence>
<evidence type="ECO:0000312" key="7">
    <source>
        <dbReference type="FlyBase" id="FBgn0037917"/>
    </source>
</evidence>
<evidence type="ECO:0000312" key="8">
    <source>
        <dbReference type="Proteomes" id="UP000000803"/>
    </source>
</evidence>
<accession>Q9VGL8</accession>
<name>TBWKD_DROME</name>
<feature type="chain" id="PRO_0000445426" description="TBC1 domain family member whacked">
    <location>
        <begin position="1"/>
        <end position="363"/>
    </location>
</feature>
<feature type="domain" description="Rab-GAP TBC" evidence="1">
    <location>
        <begin position="77"/>
        <end position="265"/>
    </location>
</feature>
<feature type="region of interest" description="Disordered" evidence="2">
    <location>
        <begin position="335"/>
        <end position="363"/>
    </location>
</feature>
<feature type="mutagenesis site" description="Seamless tube overgrowth at terminal cell tip branches." evidence="3">
    <location>
        <begin position="6"/>
        <end position="363"/>
    </location>
</feature>
<feature type="mutagenesis site" description="Seamless tube overgrowth at terminal cell tip branches." evidence="3">
    <original>M</original>
    <variation>K</variation>
    <location>
        <position position="133"/>
    </location>
</feature>
<dbReference type="EMBL" id="AE014297">
    <property type="protein sequence ID" value="AAF54659.1"/>
    <property type="molecule type" value="Genomic_DNA"/>
</dbReference>
<dbReference type="EMBL" id="AE014297">
    <property type="protein sequence ID" value="AAN13513.1"/>
    <property type="molecule type" value="Genomic_DNA"/>
</dbReference>
<dbReference type="EMBL" id="BT010263">
    <property type="protein sequence ID" value="AAQ23581.1"/>
    <property type="molecule type" value="mRNA"/>
</dbReference>
<dbReference type="RefSeq" id="NP_650089.1">
    <property type="nucleotide sequence ID" value="NM_141832.4"/>
</dbReference>
<dbReference type="RefSeq" id="NP_731593.1">
    <property type="nucleotide sequence ID" value="NM_169402.3"/>
</dbReference>
<dbReference type="SMR" id="Q9VGL8"/>
<dbReference type="FunCoup" id="Q9VGL8">
    <property type="interactions" value="652"/>
</dbReference>
<dbReference type="IntAct" id="Q9VGL8">
    <property type="interactions" value="2"/>
</dbReference>
<dbReference type="STRING" id="7227.FBpp0081890"/>
<dbReference type="PaxDb" id="7227-FBpp0081889"/>
<dbReference type="DNASU" id="41390"/>
<dbReference type="EnsemblMetazoa" id="FBtr0082413">
    <property type="protein sequence ID" value="FBpp0081889"/>
    <property type="gene ID" value="FBgn0037917"/>
</dbReference>
<dbReference type="EnsemblMetazoa" id="FBtr0082414">
    <property type="protein sequence ID" value="FBpp0081890"/>
    <property type="gene ID" value="FBgn0037917"/>
</dbReference>
<dbReference type="GeneID" id="41390"/>
<dbReference type="KEGG" id="dme:Dmel_CG5344"/>
<dbReference type="UCSC" id="CG5344-RA">
    <property type="organism name" value="d. melanogaster"/>
</dbReference>
<dbReference type="AGR" id="FB:FBgn0037917"/>
<dbReference type="CTD" id="41390"/>
<dbReference type="FlyBase" id="FBgn0037917">
    <property type="gene designation" value="wkd"/>
</dbReference>
<dbReference type="VEuPathDB" id="VectorBase:FBgn0037917"/>
<dbReference type="eggNOG" id="KOG2221">
    <property type="taxonomic scope" value="Eukaryota"/>
</dbReference>
<dbReference type="GeneTree" id="ENSGT00940000171809"/>
<dbReference type="HOGENOM" id="CLU_005350_2_2_1"/>
<dbReference type="InParanoid" id="Q9VGL8"/>
<dbReference type="OMA" id="YMQEGYL"/>
<dbReference type="OrthoDB" id="159449at2759"/>
<dbReference type="PhylomeDB" id="Q9VGL8"/>
<dbReference type="Reactome" id="R-DME-6798695">
    <property type="pathway name" value="Neutrophil degranulation"/>
</dbReference>
<dbReference type="Reactome" id="R-DME-8854214">
    <property type="pathway name" value="TBC/RABGAPs"/>
</dbReference>
<dbReference type="BioGRID-ORCS" id="41390">
    <property type="hits" value="0 hits in 3 CRISPR screens"/>
</dbReference>
<dbReference type="GenomeRNAi" id="41390"/>
<dbReference type="PRO" id="PR:Q9VGL8"/>
<dbReference type="Proteomes" id="UP000000803">
    <property type="component" value="Chromosome 3R"/>
</dbReference>
<dbReference type="Bgee" id="FBgn0037917">
    <property type="expression patterns" value="Expressed in adult optic chiasma glial cell (Drosophila) in brain and 196 other cell types or tissues"/>
</dbReference>
<dbReference type="GO" id="GO:0005737">
    <property type="term" value="C:cytoplasm"/>
    <property type="evidence" value="ECO:0000314"/>
    <property type="project" value="UniProtKB"/>
</dbReference>
<dbReference type="GO" id="GO:0098592">
    <property type="term" value="C:cytoplasmic side of apical plasma membrane"/>
    <property type="evidence" value="ECO:0000314"/>
    <property type="project" value="UniProtKB"/>
</dbReference>
<dbReference type="GO" id="GO:0031410">
    <property type="term" value="C:cytoplasmic vesicle"/>
    <property type="evidence" value="ECO:0007669"/>
    <property type="project" value="UniProtKB-KW"/>
</dbReference>
<dbReference type="GO" id="GO:0005829">
    <property type="term" value="C:cytosol"/>
    <property type="evidence" value="ECO:0007669"/>
    <property type="project" value="GOC"/>
</dbReference>
<dbReference type="GO" id="GO:0030175">
    <property type="term" value="C:filopodium"/>
    <property type="evidence" value="ECO:0000314"/>
    <property type="project" value="FlyBase"/>
</dbReference>
<dbReference type="GO" id="GO:0005096">
    <property type="term" value="F:GTPase activator activity"/>
    <property type="evidence" value="ECO:0000250"/>
    <property type="project" value="FlyBase"/>
</dbReference>
<dbReference type="GO" id="GO:0035149">
    <property type="term" value="P:lumen formation, open tracheal system"/>
    <property type="evidence" value="ECO:0000315"/>
    <property type="project" value="FlyBase"/>
</dbReference>
<dbReference type="GO" id="GO:0010085">
    <property type="term" value="P:polarity specification of proximal/distal axis"/>
    <property type="evidence" value="ECO:0000315"/>
    <property type="project" value="UniProtKB"/>
</dbReference>
<dbReference type="GO" id="GO:0042147">
    <property type="term" value="P:retrograde transport, endosome to Golgi"/>
    <property type="evidence" value="ECO:0000318"/>
    <property type="project" value="GO_Central"/>
</dbReference>
<dbReference type="FunFam" id="1.10.10.750:FF:000001">
    <property type="entry name" value="TBC1 domain family member 10A"/>
    <property type="match status" value="1"/>
</dbReference>
<dbReference type="FunFam" id="1.10.472.80:FF:000008">
    <property type="entry name" value="TBC1 domain family member 10A"/>
    <property type="match status" value="1"/>
</dbReference>
<dbReference type="FunFam" id="1.10.8.270:FF:000007">
    <property type="entry name" value="TBC1 domain family member 10A"/>
    <property type="match status" value="1"/>
</dbReference>
<dbReference type="Gene3D" id="1.10.8.270">
    <property type="entry name" value="putative rabgap domain of human tbc1 domain family member 14 like domains"/>
    <property type="match status" value="1"/>
</dbReference>
<dbReference type="Gene3D" id="1.10.10.750">
    <property type="entry name" value="Ypt/Rab-GAP domain of gyp1p, domain 1"/>
    <property type="match status" value="1"/>
</dbReference>
<dbReference type="Gene3D" id="1.10.472.80">
    <property type="entry name" value="Ypt/Rab-GAP domain of gyp1p, domain 3"/>
    <property type="match status" value="1"/>
</dbReference>
<dbReference type="InterPro" id="IPR000195">
    <property type="entry name" value="Rab-GAP-TBC_dom"/>
</dbReference>
<dbReference type="InterPro" id="IPR035969">
    <property type="entry name" value="Rab-GAP_TBC_sf"/>
</dbReference>
<dbReference type="InterPro" id="IPR050302">
    <property type="entry name" value="Rab_GAP_TBC_domain"/>
</dbReference>
<dbReference type="PANTHER" id="PTHR47219">
    <property type="entry name" value="RAB GTPASE-ACTIVATING PROTEIN 1-LIKE"/>
    <property type="match status" value="1"/>
</dbReference>
<dbReference type="PANTHER" id="PTHR47219:SF4">
    <property type="entry name" value="TBC1 DOMAIN FAMILY MEMBER 10A"/>
    <property type="match status" value="1"/>
</dbReference>
<dbReference type="Pfam" id="PF00566">
    <property type="entry name" value="RabGAP-TBC"/>
    <property type="match status" value="1"/>
</dbReference>
<dbReference type="SMART" id="SM00164">
    <property type="entry name" value="TBC"/>
    <property type="match status" value="1"/>
</dbReference>
<dbReference type="SUPFAM" id="SSF47923">
    <property type="entry name" value="Ypt/Rab-GAP domain of gyp1p"/>
    <property type="match status" value="2"/>
</dbReference>
<dbReference type="PROSITE" id="PS50086">
    <property type="entry name" value="TBC_RABGAP"/>
    <property type="match status" value="1"/>
</dbReference>
<organism evidence="8">
    <name type="scientific">Drosophila melanogaster</name>
    <name type="common">Fruit fly</name>
    <dbReference type="NCBI Taxonomy" id="7227"/>
    <lineage>
        <taxon>Eukaryota</taxon>
        <taxon>Metazoa</taxon>
        <taxon>Ecdysozoa</taxon>
        <taxon>Arthropoda</taxon>
        <taxon>Hexapoda</taxon>
        <taxon>Insecta</taxon>
        <taxon>Pterygota</taxon>
        <taxon>Neoptera</taxon>
        <taxon>Endopterygota</taxon>
        <taxon>Diptera</taxon>
        <taxon>Brachycera</taxon>
        <taxon>Muscomorpha</taxon>
        <taxon>Ephydroidea</taxon>
        <taxon>Drosophilidae</taxon>
        <taxon>Drosophila</taxon>
        <taxon>Sophophora</taxon>
    </lineage>
</organism>
<proteinExistence type="evidence at protein level"/>
<sequence length="363" mass="42051">MATAPRSLDTISLCSTVSSCPDRNGFYGGFQRTDKPKEPLSKAQIIAREKKWLYMIDNWSIYMSKNYKKIRDRCRKGIPKSVRPKAWFYLSGAYLLKKKNPNVYNELLEKPGNPTTIEEIKKDKHRQFPFHEMFLDEQKVGQIELFNVLKAYSIYNPKVGFCQAQAPIAAFLLMHLPAEDAFWVFVSVCDVYLQDYFIPGLEVIQNDAGILEGLLKKTCPPVYRHLQKHKVEPLLYMTDWFLCAMTRTLPWETLLRVWDCFLAEGIRVIFKVALVIIGASLSRHKVRKTCTGLCETLAVLRSPEEHIVEEEFIINNMMRLNLRVEDFQIEHTRQKARRAKQKAQQEAESSGSGNGHRRNMPTL</sequence>
<comment type="function">
    <text evidence="3">Essential for ensuring the polarized growth of tracheal seamless tubes. During seamless tube morphogenesis, likely to act as a GTPase-activating protein (GAP) for Rab35 to regulate vesicle trafficking from the recycling endosomes to the lumenal apical membrane to ensure the polarized dynein motor complex-dependent growth of seamless tubes along the proximodistal axis in tracheal terminal cells. When the terminal branch lumen is growing, Rab35-GTP is active and likely directs the transport of apical membrane vesicles from the soma to the distal tip of elongating terminal cell branches thus providing a continuous supply of apical membrane components as the lumen grows. Whereas when Rab35-GDP is inactivated, presumably by this GAP, apical membrane vesicles are transported to a central location adjacent to the terminal cell nucleus.</text>
</comment>
<comment type="subcellular location">
    <subcellularLocation>
        <location>Apical cell membrane</location>
        <topology evidence="3">Peripheral membrane protein</topology>
    </subcellularLocation>
    <subcellularLocation>
        <location evidence="3">Cytoplasmic vesicle</location>
    </subcellularLocation>
    <subcellularLocation>
        <location evidence="3">Cell projection</location>
        <location evidence="3">Filopodium</location>
    </subcellularLocation>
    <text evidence="3">Restricted to the lumenal membrane of tracheal terminal cells with increased accumulation at the growing tips of seamless tubes. Colocalizes with Rab35 at the apical membrane, cytoplasmic puncta (likely to be vesicles) and filopodia.</text>
</comment>
<comment type="disruption phenotype">
    <text evidence="3">RNAi-mediated knockdown in the trachea results in a U-turn phenotype in which the seamless tubes undergo a series of 180 degree turns in terminal tip cells.</text>
</comment>